<gene>
    <name type="primary">con-10</name>
    <name type="ORF">NCU07325</name>
</gene>
<proteinExistence type="evidence at transcript level"/>
<dbReference type="EMBL" id="M20005">
    <property type="protein sequence ID" value="AAA33572.1"/>
    <property type="molecule type" value="Genomic_DNA"/>
</dbReference>
<dbReference type="EMBL" id="CM002239">
    <property type="protein sequence ID" value="EAA33247.1"/>
    <property type="molecule type" value="Genomic_DNA"/>
</dbReference>
<dbReference type="PIR" id="A31849">
    <property type="entry name" value="A31849"/>
</dbReference>
<dbReference type="RefSeq" id="XP_962483.1">
    <property type="nucleotide sequence ID" value="XM_957390.3"/>
</dbReference>
<dbReference type="STRING" id="367110.P10713"/>
<dbReference type="PaxDb" id="5141-EFNCRP00000007136"/>
<dbReference type="EnsemblFungi" id="EAA33247">
    <property type="protein sequence ID" value="EAA33247"/>
    <property type="gene ID" value="NCU07325"/>
</dbReference>
<dbReference type="GeneID" id="3878631"/>
<dbReference type="KEGG" id="ncr:NCU07325"/>
<dbReference type="VEuPathDB" id="FungiDB:NCU07325"/>
<dbReference type="HOGENOM" id="CLU_122062_1_1_1"/>
<dbReference type="InParanoid" id="P10713"/>
<dbReference type="OMA" id="NDHPGRN"/>
<dbReference type="OrthoDB" id="2137750at2759"/>
<dbReference type="Proteomes" id="UP000001805">
    <property type="component" value="Chromosome 4, Linkage Group IV"/>
</dbReference>
<dbReference type="GO" id="GO:0048315">
    <property type="term" value="P:conidium formation"/>
    <property type="evidence" value="ECO:0007669"/>
    <property type="project" value="UniProtKB-KW"/>
</dbReference>
<dbReference type="GO" id="GO:0030435">
    <property type="term" value="P:sporulation resulting in formation of a cellular spore"/>
    <property type="evidence" value="ECO:0007669"/>
    <property type="project" value="UniProtKB-KW"/>
</dbReference>
<dbReference type="InterPro" id="IPR019626">
    <property type="entry name" value="Stress-induced_KGG_rpt"/>
</dbReference>
<dbReference type="InterPro" id="IPR052590">
    <property type="entry name" value="Stress/Virulence-Domain"/>
</dbReference>
<dbReference type="PANTHER" id="PTHR36569">
    <property type="match status" value="1"/>
</dbReference>
<dbReference type="PANTHER" id="PTHR36569:SF5">
    <property type="entry name" value="CONIDIATION-SPECIFIC PROTEIN 10 (EUROFUNG)"/>
    <property type="match status" value="1"/>
</dbReference>
<dbReference type="Pfam" id="PF10685">
    <property type="entry name" value="KGG"/>
    <property type="match status" value="3"/>
</dbReference>
<comment type="developmental stage">
    <text>Expressed during the late stage of conidial (dormant spores) differentiation. It is greatly reduced or absent in the aconidial mutants fd, acon-2 and acon-3.</text>
</comment>
<comment type="similarity">
    <text evidence="2">Belongs to the con-10 family.</text>
</comment>
<reference key="1">
    <citation type="journal article" date="1988" name="Mol. Cell. Biol.">
        <title>Molecular analysis of a Neurospora crassa gene expressed during conidiation.</title>
        <authorList>
            <person name="Roberts A.N."/>
            <person name="Berlin V."/>
            <person name="Hager K.M."/>
            <person name="Yanofsky C."/>
        </authorList>
    </citation>
    <scope>NUCLEOTIDE SEQUENCE [GENOMIC DNA]</scope>
    <source>
        <tissue>Conidium</tissue>
    </source>
</reference>
<reference key="2">
    <citation type="journal article" date="2003" name="Nature">
        <title>The genome sequence of the filamentous fungus Neurospora crassa.</title>
        <authorList>
            <person name="Galagan J.E."/>
            <person name="Calvo S.E."/>
            <person name="Borkovich K.A."/>
            <person name="Selker E.U."/>
            <person name="Read N.D."/>
            <person name="Jaffe D.B."/>
            <person name="FitzHugh W."/>
            <person name="Ma L.-J."/>
            <person name="Smirnov S."/>
            <person name="Purcell S."/>
            <person name="Rehman B."/>
            <person name="Elkins T."/>
            <person name="Engels R."/>
            <person name="Wang S."/>
            <person name="Nielsen C.B."/>
            <person name="Butler J."/>
            <person name="Endrizzi M."/>
            <person name="Qui D."/>
            <person name="Ianakiev P."/>
            <person name="Bell-Pedersen D."/>
            <person name="Nelson M.A."/>
            <person name="Werner-Washburne M."/>
            <person name="Selitrennikoff C.P."/>
            <person name="Kinsey J.A."/>
            <person name="Braun E.L."/>
            <person name="Zelter A."/>
            <person name="Schulte U."/>
            <person name="Kothe G.O."/>
            <person name="Jedd G."/>
            <person name="Mewes H.-W."/>
            <person name="Staben C."/>
            <person name="Marcotte E."/>
            <person name="Greenberg D."/>
            <person name="Roy A."/>
            <person name="Foley K."/>
            <person name="Naylor J."/>
            <person name="Stange-Thomann N."/>
            <person name="Barrett R."/>
            <person name="Gnerre S."/>
            <person name="Kamal M."/>
            <person name="Kamvysselis M."/>
            <person name="Mauceli E.W."/>
            <person name="Bielke C."/>
            <person name="Rudd S."/>
            <person name="Frishman D."/>
            <person name="Krystofova S."/>
            <person name="Rasmussen C."/>
            <person name="Metzenberg R.L."/>
            <person name="Perkins D.D."/>
            <person name="Kroken S."/>
            <person name="Cogoni C."/>
            <person name="Macino G."/>
            <person name="Catcheside D.E.A."/>
            <person name="Li W."/>
            <person name="Pratt R.J."/>
            <person name="Osmani S.A."/>
            <person name="DeSouza C.P.C."/>
            <person name="Glass N.L."/>
            <person name="Orbach M.J."/>
            <person name="Berglund J.A."/>
            <person name="Voelker R."/>
            <person name="Yarden O."/>
            <person name="Plamann M."/>
            <person name="Seiler S."/>
            <person name="Dunlap J.C."/>
            <person name="Radford A."/>
            <person name="Aramayo R."/>
            <person name="Natvig D.O."/>
            <person name="Alex L.A."/>
            <person name="Mannhaupt G."/>
            <person name="Ebbole D.J."/>
            <person name="Freitag M."/>
            <person name="Paulsen I."/>
            <person name="Sachs M.S."/>
            <person name="Lander E.S."/>
            <person name="Nusbaum C."/>
            <person name="Birren B.W."/>
        </authorList>
    </citation>
    <scope>NUCLEOTIDE SEQUENCE [LARGE SCALE GENOMIC DNA]</scope>
    <source>
        <strain>ATCC 24698 / 74-OR23-1A / CBS 708.71 / DSM 1257 / FGSC 987</strain>
    </source>
</reference>
<evidence type="ECO:0000256" key="1">
    <source>
        <dbReference type="SAM" id="MobiDB-lite"/>
    </source>
</evidence>
<evidence type="ECO:0000305" key="2"/>
<name>CON10_NEUCR</name>
<keyword id="KW-0183">Conidiation</keyword>
<keyword id="KW-0221">Differentiation</keyword>
<keyword id="KW-1185">Reference proteome</keyword>
<keyword id="KW-0749">Sporulation</keyword>
<organism>
    <name type="scientific">Neurospora crassa (strain ATCC 24698 / 74-OR23-1A / CBS 708.71 / DSM 1257 / FGSC 987)</name>
    <dbReference type="NCBI Taxonomy" id="367110"/>
    <lineage>
        <taxon>Eukaryota</taxon>
        <taxon>Fungi</taxon>
        <taxon>Dikarya</taxon>
        <taxon>Ascomycota</taxon>
        <taxon>Pezizomycotina</taxon>
        <taxon>Sordariomycetes</taxon>
        <taxon>Sordariomycetidae</taxon>
        <taxon>Sordariales</taxon>
        <taxon>Sordariaceae</taxon>
        <taxon>Neurospora</taxon>
    </lineage>
</organism>
<accession>P10713</accession>
<accession>Q7SA38</accession>
<sequence length="86" mass="8568">MAGTGNDNPGNFANRPKEEVQAIASKGGQASHSGGFASMDPEKQREIASKGGKASSGSFEPGSEKAREAGRKGGKASGGTGADDDE</sequence>
<protein>
    <recommendedName>
        <fullName>Conidiation-specific protein 10</fullName>
    </recommendedName>
</protein>
<feature type="chain" id="PRO_0000090018" description="Conidiation-specific protein 10">
    <location>
        <begin position="1"/>
        <end position="86"/>
    </location>
</feature>
<feature type="region of interest" description="Disordered" evidence="1">
    <location>
        <begin position="1"/>
        <end position="86"/>
    </location>
</feature>
<feature type="compositionally biased region" description="Polar residues" evidence="1">
    <location>
        <begin position="1"/>
        <end position="11"/>
    </location>
</feature>
<feature type="compositionally biased region" description="Low complexity" evidence="1">
    <location>
        <begin position="49"/>
        <end position="58"/>
    </location>
</feature>
<feature type="compositionally biased region" description="Basic and acidic residues" evidence="1">
    <location>
        <begin position="62"/>
        <end position="71"/>
    </location>
</feature>
<feature type="compositionally biased region" description="Gly residues" evidence="1">
    <location>
        <begin position="75"/>
        <end position="86"/>
    </location>
</feature>